<accession>Q91903</accession>
<accession>B7ZSI9</accession>
<accession>Q52KU1</accession>
<accession>Q91583</accession>
<name>ELAV2_XENLA</name>
<gene>
    <name type="primary">elavl2</name>
    <name evidence="19" type="synonym">el-1</name>
    <name evidence="17" type="synonym">elavl2-a</name>
    <name evidence="16" type="synonym">elrB</name>
</gene>
<protein>
    <recommendedName>
        <fullName>ELAV-like protein 2</fullName>
    </recommendedName>
    <alternativeName>
        <fullName evidence="12">Elav like-1</fullName>
        <shortName evidence="19">Xel-1</shortName>
    </alternativeName>
    <alternativeName>
        <fullName evidence="13">Protein ElrB</fullName>
    </alternativeName>
    <alternativeName>
        <fullName evidence="11">p45</fullName>
    </alternativeName>
</protein>
<dbReference type="EMBL" id="X85111">
    <property type="protein sequence ID" value="CAA59430.1"/>
    <property type="molecule type" value="mRNA"/>
</dbReference>
<dbReference type="EMBL" id="U17597">
    <property type="protein sequence ID" value="AAA96943.1"/>
    <property type="molecule type" value="mRNA"/>
</dbReference>
<dbReference type="EMBL" id="BC170539">
    <property type="protein sequence ID" value="AAI70539.1"/>
    <property type="molecule type" value="mRNA"/>
</dbReference>
<dbReference type="EMBL" id="BC094189">
    <property type="protein sequence ID" value="AAH94189.1"/>
    <property type="status" value="ALT_INIT"/>
    <property type="molecule type" value="mRNA"/>
</dbReference>
<dbReference type="PIR" id="I51676">
    <property type="entry name" value="I51676"/>
</dbReference>
<dbReference type="RefSeq" id="NP_001081035.1">
    <molecule id="Q91903-1"/>
    <property type="nucleotide sequence ID" value="NM_001087566.1"/>
</dbReference>
<dbReference type="RefSeq" id="NP_001081613.1">
    <molecule id="Q91903-1"/>
    <property type="nucleotide sequence ID" value="NM_001088144.1"/>
</dbReference>
<dbReference type="RefSeq" id="XP_018083833.1">
    <molecule id="Q91903-1"/>
    <property type="nucleotide sequence ID" value="XM_018228344.1"/>
</dbReference>
<dbReference type="RefSeq" id="XP_018083899.1">
    <molecule id="Q91903-1"/>
    <property type="nucleotide sequence ID" value="XM_018228410.1"/>
</dbReference>
<dbReference type="RefSeq" id="XP_018083945.1">
    <property type="nucleotide sequence ID" value="XM_018228456.1"/>
</dbReference>
<dbReference type="RefSeq" id="XP_018083985.1">
    <molecule id="Q91903-1"/>
    <property type="nucleotide sequence ID" value="XM_018228496.1"/>
</dbReference>
<dbReference type="RefSeq" id="XP_018084043.1">
    <property type="nucleotide sequence ID" value="XM_018228554.1"/>
</dbReference>
<dbReference type="RefSeq" id="XP_018084087.1">
    <property type="nucleotide sequence ID" value="XM_018228598.1"/>
</dbReference>
<dbReference type="RefSeq" id="XP_018084130.1">
    <property type="nucleotide sequence ID" value="XM_018228641.1"/>
</dbReference>
<dbReference type="RefSeq" id="XP_018084175.1">
    <molecule id="Q91903-2"/>
    <property type="nucleotide sequence ID" value="XM_018228686.1"/>
</dbReference>
<dbReference type="SMR" id="Q91903"/>
<dbReference type="BioGRID" id="98944">
    <property type="interactions" value="1"/>
</dbReference>
<dbReference type="IntAct" id="Q91903">
    <property type="interactions" value="1"/>
</dbReference>
<dbReference type="MINT" id="Q91903"/>
<dbReference type="DNASU" id="394342"/>
<dbReference type="GeneID" id="394342"/>
<dbReference type="KEGG" id="xla:394342"/>
<dbReference type="AGR" id="Xenbase:XB-GENE-866091"/>
<dbReference type="CTD" id="394342"/>
<dbReference type="Xenbase" id="XB-GENE-866091">
    <property type="gene designation" value="elavl2.L"/>
</dbReference>
<dbReference type="OMA" id="YPSCHSA"/>
<dbReference type="OrthoDB" id="266020at2759"/>
<dbReference type="CD-CODE" id="51D14917">
    <property type="entry name" value="L-bodies"/>
</dbReference>
<dbReference type="Proteomes" id="UP000186698">
    <property type="component" value="Chromosome 1L"/>
</dbReference>
<dbReference type="Bgee" id="394342">
    <property type="expression patterns" value="Expressed in egg cell and 12 other cell types or tissues"/>
</dbReference>
<dbReference type="GO" id="GO:0005938">
    <property type="term" value="C:cell cortex"/>
    <property type="evidence" value="ECO:0000314"/>
    <property type="project" value="UniProtKB"/>
</dbReference>
<dbReference type="GO" id="GO:0005737">
    <property type="term" value="C:cytoplasm"/>
    <property type="evidence" value="ECO:0000314"/>
    <property type="project" value="UniProtKB"/>
</dbReference>
<dbReference type="GO" id="GO:0032991">
    <property type="term" value="C:protein-containing complex"/>
    <property type="evidence" value="ECO:0000314"/>
    <property type="project" value="UniProtKB"/>
</dbReference>
<dbReference type="GO" id="GO:1990904">
    <property type="term" value="C:ribonucleoprotein complex"/>
    <property type="evidence" value="ECO:0000314"/>
    <property type="project" value="UniProtKB"/>
</dbReference>
<dbReference type="GO" id="GO:0042802">
    <property type="term" value="F:identical protein binding"/>
    <property type="evidence" value="ECO:0000353"/>
    <property type="project" value="UniProtKB"/>
</dbReference>
<dbReference type="GO" id="GO:0003730">
    <property type="term" value="F:mRNA 3'-UTR binding"/>
    <property type="evidence" value="ECO:0000314"/>
    <property type="project" value="UniProtKB"/>
</dbReference>
<dbReference type="GO" id="GO:0017131">
    <property type="term" value="F:uridine-rich cytoplasmic polyadenylylation element binding"/>
    <property type="evidence" value="ECO:0000314"/>
    <property type="project" value="UniProtKB"/>
</dbReference>
<dbReference type="GO" id="GO:0008298">
    <property type="term" value="P:intracellular mRNA localization"/>
    <property type="evidence" value="ECO:0000315"/>
    <property type="project" value="UniProtKB"/>
</dbReference>
<dbReference type="GO" id="GO:0045892">
    <property type="term" value="P:negative regulation of DNA-templated transcription"/>
    <property type="evidence" value="ECO:0000314"/>
    <property type="project" value="UniProtKB"/>
</dbReference>
<dbReference type="GO" id="GO:0000122">
    <property type="term" value="P:negative regulation of transcription by RNA polymerase II"/>
    <property type="evidence" value="ECO:0000314"/>
    <property type="project" value="UniProtKB"/>
</dbReference>
<dbReference type="GO" id="GO:0007399">
    <property type="term" value="P:nervous system development"/>
    <property type="evidence" value="ECO:0000315"/>
    <property type="project" value="UniProtKB"/>
</dbReference>
<dbReference type="CDD" id="cd12775">
    <property type="entry name" value="RRM2_HuB"/>
    <property type="match status" value="1"/>
</dbReference>
<dbReference type="CDD" id="cd12654">
    <property type="entry name" value="RRM3_HuB"/>
    <property type="match status" value="1"/>
</dbReference>
<dbReference type="FunFam" id="3.30.70.330:FF:000006">
    <property type="entry name" value="ELAV-like 3"/>
    <property type="match status" value="1"/>
</dbReference>
<dbReference type="FunFam" id="3.30.70.330:FF:000005">
    <property type="entry name" value="ELAV-like protein"/>
    <property type="match status" value="1"/>
</dbReference>
<dbReference type="FunFam" id="3.30.70.330:FF:000017">
    <property type="entry name" value="ELAV-like protein"/>
    <property type="match status" value="1"/>
</dbReference>
<dbReference type="Gene3D" id="3.30.70.330">
    <property type="match status" value="3"/>
</dbReference>
<dbReference type="InterPro" id="IPR006548">
    <property type="entry name" value="ELAD_HU_SF"/>
</dbReference>
<dbReference type="InterPro" id="IPR034999">
    <property type="entry name" value="HuB_RRM2"/>
</dbReference>
<dbReference type="InterPro" id="IPR034914">
    <property type="entry name" value="HuB_RRM3"/>
</dbReference>
<dbReference type="InterPro" id="IPR002343">
    <property type="entry name" value="Hud_Sxl_RNA"/>
</dbReference>
<dbReference type="InterPro" id="IPR012677">
    <property type="entry name" value="Nucleotide-bd_a/b_plait_sf"/>
</dbReference>
<dbReference type="InterPro" id="IPR035979">
    <property type="entry name" value="RBD_domain_sf"/>
</dbReference>
<dbReference type="InterPro" id="IPR000504">
    <property type="entry name" value="RRM_dom"/>
</dbReference>
<dbReference type="NCBIfam" id="TIGR01661">
    <property type="entry name" value="ELAV_HUD_SF"/>
    <property type="match status" value="1"/>
</dbReference>
<dbReference type="PANTHER" id="PTHR10352">
    <property type="entry name" value="EUKARYOTIC TRANSLATION INITIATION FACTOR 3 SUBUNIT G"/>
    <property type="match status" value="1"/>
</dbReference>
<dbReference type="Pfam" id="PF00076">
    <property type="entry name" value="RRM_1"/>
    <property type="match status" value="3"/>
</dbReference>
<dbReference type="PRINTS" id="PR00961">
    <property type="entry name" value="HUDSXLRNA"/>
</dbReference>
<dbReference type="SMART" id="SM00360">
    <property type="entry name" value="RRM"/>
    <property type="match status" value="3"/>
</dbReference>
<dbReference type="SUPFAM" id="SSF54928">
    <property type="entry name" value="RNA-binding domain, RBD"/>
    <property type="match status" value="2"/>
</dbReference>
<dbReference type="PROSITE" id="PS50102">
    <property type="entry name" value="RRM"/>
    <property type="match status" value="3"/>
</dbReference>
<comment type="function">
    <text evidence="3 7">Binds to poly-U elements and AU-rich elements (AREs) in the 3'-UTR of target mRNAs. Required for the vegetal localization of vg1 mRNA. Probably required for nervous system development.</text>
</comment>
<comment type="subunit">
    <text evidence="6 7">Part of a ribonucleoprotein (RNP) complex, at least composed of elavl1/elrA and/or elavl2/elrB, igf2bp3/vg1RBP, ddx6/Xp54, ybx2/frgy2, lsm14b/rap55b and, in a subset of RNP complexes, stau1/staufen. Binds RNA as a homooligomer.</text>
</comment>
<comment type="subcellular location">
    <subcellularLocation>
        <location evidence="6 10">Cytoplasm</location>
    </subcellularLocation>
    <subcellularLocation>
        <location evidence="6 10">Cytoplasm</location>
        <location evidence="6 10">Cell cortex</location>
    </subcellularLocation>
    <text evidence="6 10">Enriched at the vegetal cortex in stage III and IV oocytes. Shows both nuclear and cytoplasmic localization in the neural tube at the neurula stage, although endogenous elavl2 is not expressed at this stage.</text>
</comment>
<comment type="alternative products">
    <event type="alternative splicing"/>
    <isoform>
        <id>Q91903-1</id>
        <name evidence="8 9">1</name>
        <sequence type="displayed"/>
    </isoform>
    <isoform>
        <id>Q91903-2</id>
        <name>2</name>
        <sequence type="described" ref="VSP_038717"/>
    </isoform>
</comment>
<comment type="tissue specificity">
    <text evidence="4 5 8 9">Expressed in brain, testis and ovary. Ovarian expression is restricted to follicle cells surrounding the oocyte. From the early tailbud stage, expression is neural-specific and is seen in both the central and peripheral nervous system in differentiating neurons but not proliferating precursors. Expressed in the retina from stage 32 with expression becoming restricted to the ganglion cell layer by later stages.</text>
</comment>
<comment type="developmental stage">
    <text evidence="6 8">Expressed both maternally and zygotically. Predominantly expressed in the early stages of oogenesis (stages I to III), with expression levels declining from stage IV onwards. Zygotic expression begins at the early tailbud stage.</text>
</comment>
<comment type="similarity">
    <text evidence="1">Belongs to the RRM elav family.</text>
</comment>
<comment type="caution">
    <text evidence="15">The 45 kDa RNA-binding proteins identified in PubMed:7969126, PubMed:8873767 and PubMed:11087864 may correspond to elavl2/elrB.</text>
</comment>
<comment type="sequence caution" evidence="15">
    <conflict type="erroneous initiation">
        <sequence resource="EMBL-CDS" id="AAH94189"/>
    </conflict>
</comment>
<keyword id="KW-0025">Alternative splicing</keyword>
<keyword id="KW-0963">Cytoplasm</keyword>
<keyword id="KW-0217">Developmental protein</keyword>
<keyword id="KW-1185">Reference proteome</keyword>
<keyword id="KW-0677">Repeat</keyword>
<keyword id="KW-0687">Ribonucleoprotein</keyword>
<keyword id="KW-0694">RNA-binding</keyword>
<sequence length="389" mass="42709">MAVRLCDVASLLRSGSWAAEPWTGQVIAAMETQLSNGPTCNNTANCPNTINCSSPVESNNTEDSKTNLIVNYLPQNMTQEELKSLFGSIGEIESCKLVRDKITEGQSLGYGFVNYIDPKDAEKAINTLNGLRLQTKTIKVSYARPSSASIRDANLYVSGLPKTMTQKELEQLFSQYGRIITSRILVDQVTGVSRGVGFIRFDKRIEAEEAIKGLNGQKPPGATEPITVKFANNPSQKVNHTILSQLYQSPNRRYPGPLAQQAQRFRLDNLLNMAYGGIKSRFSPMAIDGMTSLAGINFPGHAGTGWCIFVYNLAPDADESILWQMFGPFGAVTNVKVIRDFNTNKCKGFGFVTMTNYDEAAMAIASLNGYRLGDRVLQVSFKTSKTHKA</sequence>
<evidence type="ECO:0000255" key="1"/>
<evidence type="ECO:0000255" key="2">
    <source>
        <dbReference type="PROSITE-ProRule" id="PRU00176"/>
    </source>
</evidence>
<evidence type="ECO:0000269" key="3">
    <source>
    </source>
</evidence>
<evidence type="ECO:0000269" key="4">
    <source>
    </source>
</evidence>
<evidence type="ECO:0000269" key="5">
    <source>
    </source>
</evidence>
<evidence type="ECO:0000269" key="6">
    <source>
    </source>
</evidence>
<evidence type="ECO:0000269" key="7">
    <source>
    </source>
</evidence>
<evidence type="ECO:0000269" key="8">
    <source>
    </source>
</evidence>
<evidence type="ECO:0000269" key="9">
    <source>
    </source>
</evidence>
<evidence type="ECO:0000269" key="10">
    <source>
    </source>
</evidence>
<evidence type="ECO:0000303" key="11">
    <source>
    </source>
</evidence>
<evidence type="ECO:0000303" key="12">
    <source>
    </source>
</evidence>
<evidence type="ECO:0000303" key="13">
    <source>
    </source>
</evidence>
<evidence type="ECO:0000303" key="14">
    <source ref="3"/>
</evidence>
<evidence type="ECO:0000305" key="15"/>
<evidence type="ECO:0000312" key="16">
    <source>
        <dbReference type="EMBL" id="AAA96943.1"/>
    </source>
</evidence>
<evidence type="ECO:0000312" key="17">
    <source>
        <dbReference type="EMBL" id="AAH94189.1"/>
    </source>
</evidence>
<evidence type="ECO:0000312" key="18">
    <source>
        <dbReference type="EMBL" id="AAI70539.1"/>
    </source>
</evidence>
<evidence type="ECO:0000312" key="19">
    <source>
        <dbReference type="EMBL" id="CAA59430.1"/>
    </source>
</evidence>
<reference evidence="15 19" key="1">
    <citation type="journal article" date="1995" name="Mech. Dev.">
        <title>Isolation and embryonic expression of Xel-1, a nervous system-specific Xenopus gene related to the elav gene family.</title>
        <authorList>
            <person name="Perron M."/>
            <person name="Theodore L."/>
            <person name="Wegnez M."/>
        </authorList>
    </citation>
    <scope>NUCLEOTIDE SEQUENCE [MRNA] (ISOFORM 1)</scope>
    <scope>TISSUE SPECIFICITY</scope>
    <scope>DEVELOPMENTAL STAGE</scope>
    <source>
        <tissue evidence="19">Brain</tissue>
    </source>
</reference>
<reference evidence="15 16" key="2">
    <citation type="journal article" date="1995" name="Proc. Natl. Acad. Sci. U.S.A.">
        <title>A conserved family of elav-like genes in vertebrates.</title>
        <authorList>
            <person name="Good P.J."/>
        </authorList>
    </citation>
    <scope>NUCLEOTIDE SEQUENCE [MRNA] (ISOFORM 1)</scope>
    <scope>TISSUE SPECIFICITY</scope>
    <source>
        <tissue evidence="16">Brain</tissue>
    </source>
</reference>
<reference evidence="15 18" key="3">
    <citation type="submission" date="2008-11" db="EMBL/GenBank/DDBJ databases">
        <authorList>
            <consortium name="NIH - Xenopus Gene Collection (XGC) project"/>
        </authorList>
    </citation>
    <scope>NUCLEOTIDE SEQUENCE [LARGE SCALE MRNA] (ISOFORM 2)</scope>
    <source>
        <tissue evidence="17">Oocyte</tissue>
    </source>
</reference>
<reference evidence="15" key="4">
    <citation type="journal article" date="1997" name="DNA Cell Biol.">
        <title>Subcellular distribution of Xenopus XEL-1 protein, a member of the neuron-specific ELAV/Hu family, revealed by epitope tagging.</title>
        <authorList>
            <person name="Perron M."/>
            <person name="Bourlitio P."/>
            <person name="Wegnez M."/>
            <person name="Theodore L."/>
        </authorList>
    </citation>
    <scope>SUBCELLULAR LOCATION</scope>
</reference>
<reference evidence="15" key="5">
    <citation type="journal article" date="1999" name="Int. J. Dev. Biol.">
        <title>Misexpression of the RNA-binding protein ELRB in Xenopus presumptive neurectoderm induces proliferation arrest and programmed cell death.</title>
        <authorList>
            <person name="Perron M."/>
            <person name="Furrer M.P."/>
            <person name="Wegnez M."/>
            <person name="Theodore L."/>
        </authorList>
    </citation>
    <scope>FUNCTION</scope>
</reference>
<reference evidence="15" key="6">
    <citation type="journal article" date="1999" name="Mech. Dev.">
        <title>Xenopus elav-like genes are differentially expressed during neurogenesis.</title>
        <authorList>
            <person name="Perron M."/>
            <person name="Furrer M.P."/>
            <person name="Wegnez M."/>
            <person name="Theodore L."/>
        </authorList>
    </citation>
    <scope>TISSUE SPECIFICITY</scope>
</reference>
<reference evidence="15" key="7">
    <citation type="journal article" date="2001" name="RNA">
        <title>A 250-nucleotide UA-rich element in the 3' untranslated region of Xenopus laevis Vg1 mRNA represses translation both in vivo and in vitro.</title>
        <authorList>
            <person name="Otero L.J."/>
            <person name="Devaux A."/>
            <person name="Standart N."/>
        </authorList>
    </citation>
    <scope>RNA-BINDING</scope>
</reference>
<reference evidence="15" key="8">
    <citation type="journal article" date="2005" name="J. Comp. Neurol.">
        <title>Comparison of the expression patterns of five neural RNA binding proteins in the Xenopus retina.</title>
        <authorList>
            <person name="Amato M.A."/>
            <person name="Boy S."/>
            <person name="Arnault E."/>
            <person name="Girard M."/>
            <person name="Della Puppa A."/>
            <person name="Sharif A."/>
            <person name="Perron M."/>
        </authorList>
    </citation>
    <scope>TISSUE SPECIFICITY</scope>
</reference>
<reference evidence="15" key="9">
    <citation type="journal article" date="2005" name="Mol. Cell. Biol.">
        <title>The Xenopus ELAV protein ElrB represses Vg1 mRNA translation during oogenesis.</title>
        <authorList>
            <person name="Colegrove-Otero L.J."/>
            <person name="Devaux A."/>
            <person name="Standart N."/>
        </authorList>
    </citation>
    <scope>RNA-BINDING</scope>
    <scope>IDENTIFICATION IN A RIBONUCLEOPROTEIN COMPLEX</scope>
    <scope>SUBCELLULAR LOCATION</scope>
    <scope>DEVELOPMENTAL STAGE</scope>
</reference>
<reference evidence="15" key="10">
    <citation type="journal article" date="2006" name="FEBS Lett.">
        <title>Xenopus ElrB, but not ElrA, binds RNA as an oligomer: possible role of the linker.</title>
        <authorList>
            <person name="Devaux A."/>
            <person name="Colegrove-Otero L.J."/>
            <person name="Standart N."/>
        </authorList>
    </citation>
    <scope>RNA-BINDING</scope>
    <scope>HOMOOLIGOMERIZATION</scope>
</reference>
<reference evidence="15" key="11">
    <citation type="journal article" date="2009" name="J. Biol. Chem.">
        <title>Participation of Xenopus Elr-type proteins in vegetal mRNA localization during oogenesis.</title>
        <authorList>
            <person name="Arthur P.K."/>
            <person name="Claussen M."/>
            <person name="Koch S."/>
            <person name="Tarbashevich K."/>
            <person name="Jahn O."/>
            <person name="Pieler T."/>
        </authorList>
    </citation>
    <scope>FUNCTION</scope>
    <scope>RNA-BINDING</scope>
    <scope>IDENTIFICATION IN A RIBONUCLEOPROTEIN COMPLEX WITH IGF2BP3; STAU1; DDX6; LSM14B AND YBX2</scope>
</reference>
<proteinExistence type="evidence at protein level"/>
<feature type="chain" id="PRO_0000391371" description="ELAV-like protein 2">
    <location>
        <begin position="1"/>
        <end position="389"/>
    </location>
</feature>
<feature type="domain" description="RRM 1" evidence="2">
    <location>
        <begin position="66"/>
        <end position="145"/>
    </location>
</feature>
<feature type="domain" description="RRM 2" evidence="2">
    <location>
        <begin position="153"/>
        <end position="233"/>
    </location>
</feature>
<feature type="domain" description="RRM 3" evidence="2">
    <location>
        <begin position="306"/>
        <end position="384"/>
    </location>
</feature>
<feature type="splice variant" id="VSP_038717" description="In isoform 2." evidence="14">
    <location>
        <position position="104"/>
    </location>
</feature>
<feature type="sequence conflict" description="In Ref. 1; CAA59430." evidence="15" ref="1">
    <original>L</original>
    <variation>V</variation>
    <location>
        <position position="128"/>
    </location>
</feature>
<organism>
    <name type="scientific">Xenopus laevis</name>
    <name type="common">African clawed frog</name>
    <dbReference type="NCBI Taxonomy" id="8355"/>
    <lineage>
        <taxon>Eukaryota</taxon>
        <taxon>Metazoa</taxon>
        <taxon>Chordata</taxon>
        <taxon>Craniata</taxon>
        <taxon>Vertebrata</taxon>
        <taxon>Euteleostomi</taxon>
        <taxon>Amphibia</taxon>
        <taxon>Batrachia</taxon>
        <taxon>Anura</taxon>
        <taxon>Pipoidea</taxon>
        <taxon>Pipidae</taxon>
        <taxon>Xenopodinae</taxon>
        <taxon>Xenopus</taxon>
        <taxon>Xenopus</taxon>
    </lineage>
</organism>